<keyword id="KW-0001">2Fe-2S</keyword>
<keyword id="KW-0010">Activator</keyword>
<keyword id="KW-0238">DNA-binding</keyword>
<keyword id="KW-0408">Iron</keyword>
<keyword id="KW-0411">Iron-sulfur</keyword>
<keyword id="KW-0479">Metal-binding</keyword>
<keyword id="KW-0678">Repressor</keyword>
<keyword id="KW-0804">Transcription</keyword>
<keyword id="KW-0805">Transcription regulation</keyword>
<evidence type="ECO:0000255" key="1">
    <source>
        <dbReference type="HAMAP-Rule" id="MF_01176"/>
    </source>
</evidence>
<evidence type="ECO:0000256" key="2">
    <source>
        <dbReference type="SAM" id="MobiDB-lite"/>
    </source>
</evidence>
<comment type="function">
    <text evidence="1">Regulates the transcription of several operons and genes involved in the biogenesis of Fe-S clusters and Fe-S-containing proteins.</text>
</comment>
<comment type="cofactor">
    <cofactor evidence="1">
        <name>[2Fe-2S] cluster</name>
        <dbReference type="ChEBI" id="CHEBI:190135"/>
    </cofactor>
    <text evidence="1">Binds 1 [2Fe-2S] cluster.</text>
</comment>
<proteinExistence type="inferred from homology"/>
<name>ISCR_ECOL5</name>
<dbReference type="EMBL" id="CP000247">
    <property type="protein sequence ID" value="ABG70525.1"/>
    <property type="molecule type" value="Genomic_DNA"/>
</dbReference>
<dbReference type="RefSeq" id="WP_001241357.1">
    <property type="nucleotide sequence ID" value="NC_008253.1"/>
</dbReference>
<dbReference type="SMR" id="Q0TEV4"/>
<dbReference type="GeneID" id="86947421"/>
<dbReference type="KEGG" id="ecp:ECP_2536"/>
<dbReference type="HOGENOM" id="CLU_107144_0_0_6"/>
<dbReference type="Proteomes" id="UP000009182">
    <property type="component" value="Chromosome"/>
</dbReference>
<dbReference type="GO" id="GO:0005829">
    <property type="term" value="C:cytosol"/>
    <property type="evidence" value="ECO:0007669"/>
    <property type="project" value="TreeGrafter"/>
</dbReference>
<dbReference type="GO" id="GO:0051537">
    <property type="term" value="F:2 iron, 2 sulfur cluster binding"/>
    <property type="evidence" value="ECO:0007669"/>
    <property type="project" value="UniProtKB-KW"/>
</dbReference>
<dbReference type="GO" id="GO:0003700">
    <property type="term" value="F:DNA-binding transcription factor activity"/>
    <property type="evidence" value="ECO:0007669"/>
    <property type="project" value="UniProtKB-UniRule"/>
</dbReference>
<dbReference type="GO" id="GO:0003690">
    <property type="term" value="F:double-stranded DNA binding"/>
    <property type="evidence" value="ECO:0007669"/>
    <property type="project" value="UniProtKB-UniRule"/>
</dbReference>
<dbReference type="GO" id="GO:0005506">
    <property type="term" value="F:iron ion binding"/>
    <property type="evidence" value="ECO:0007669"/>
    <property type="project" value="UniProtKB-UniRule"/>
</dbReference>
<dbReference type="FunFam" id="1.10.10.10:FF:000026">
    <property type="entry name" value="HTH-type transcriptional regulator IscR"/>
    <property type="match status" value="1"/>
</dbReference>
<dbReference type="Gene3D" id="1.10.10.10">
    <property type="entry name" value="Winged helix-like DNA-binding domain superfamily/Winged helix DNA-binding domain"/>
    <property type="match status" value="1"/>
</dbReference>
<dbReference type="HAMAP" id="MF_01176">
    <property type="entry name" value="HTH_type_IscR"/>
    <property type="match status" value="1"/>
</dbReference>
<dbReference type="InterPro" id="IPR010242">
    <property type="entry name" value="TF_HTH_IscR"/>
</dbReference>
<dbReference type="InterPro" id="IPR030489">
    <property type="entry name" value="TR_Rrf2-type_CS"/>
</dbReference>
<dbReference type="InterPro" id="IPR000944">
    <property type="entry name" value="Tscrpt_reg_Rrf2"/>
</dbReference>
<dbReference type="InterPro" id="IPR036388">
    <property type="entry name" value="WH-like_DNA-bd_sf"/>
</dbReference>
<dbReference type="InterPro" id="IPR036390">
    <property type="entry name" value="WH_DNA-bd_sf"/>
</dbReference>
<dbReference type="NCBIfam" id="TIGR02010">
    <property type="entry name" value="IscR"/>
    <property type="match status" value="1"/>
</dbReference>
<dbReference type="NCBIfam" id="NF008110">
    <property type="entry name" value="PRK10857.1"/>
    <property type="match status" value="1"/>
</dbReference>
<dbReference type="NCBIfam" id="TIGR00738">
    <property type="entry name" value="rrf2_super"/>
    <property type="match status" value="1"/>
</dbReference>
<dbReference type="PANTHER" id="PTHR33221:SF5">
    <property type="entry name" value="HTH-TYPE TRANSCRIPTIONAL REGULATOR ISCR"/>
    <property type="match status" value="1"/>
</dbReference>
<dbReference type="PANTHER" id="PTHR33221">
    <property type="entry name" value="WINGED HELIX-TURN-HELIX TRANSCRIPTIONAL REGULATOR, RRF2 FAMILY"/>
    <property type="match status" value="1"/>
</dbReference>
<dbReference type="Pfam" id="PF02082">
    <property type="entry name" value="Rrf2"/>
    <property type="match status" value="1"/>
</dbReference>
<dbReference type="SUPFAM" id="SSF46785">
    <property type="entry name" value="Winged helix' DNA-binding domain"/>
    <property type="match status" value="1"/>
</dbReference>
<dbReference type="PROSITE" id="PS01332">
    <property type="entry name" value="HTH_RRF2_1"/>
    <property type="match status" value="1"/>
</dbReference>
<dbReference type="PROSITE" id="PS51197">
    <property type="entry name" value="HTH_RRF2_2"/>
    <property type="match status" value="1"/>
</dbReference>
<organism>
    <name type="scientific">Escherichia coli O6:K15:H31 (strain 536 / UPEC)</name>
    <dbReference type="NCBI Taxonomy" id="362663"/>
    <lineage>
        <taxon>Bacteria</taxon>
        <taxon>Pseudomonadati</taxon>
        <taxon>Pseudomonadota</taxon>
        <taxon>Gammaproteobacteria</taxon>
        <taxon>Enterobacterales</taxon>
        <taxon>Enterobacteriaceae</taxon>
        <taxon>Escherichia</taxon>
    </lineage>
</organism>
<reference key="1">
    <citation type="journal article" date="2006" name="Mol. Microbiol.">
        <title>Role of pathogenicity island-associated integrases in the genome plasticity of uropathogenic Escherichia coli strain 536.</title>
        <authorList>
            <person name="Hochhut B."/>
            <person name="Wilde C."/>
            <person name="Balling G."/>
            <person name="Middendorf B."/>
            <person name="Dobrindt U."/>
            <person name="Brzuszkiewicz E."/>
            <person name="Gottschalk G."/>
            <person name="Carniel E."/>
            <person name="Hacker J."/>
        </authorList>
    </citation>
    <scope>NUCLEOTIDE SEQUENCE [LARGE SCALE GENOMIC DNA]</scope>
    <source>
        <strain>536 / UPEC</strain>
    </source>
</reference>
<sequence>MRLTSKGRYAVTAMLDVALNSEAGPVPLADISERQGISLSYLEQLFSRLRKNGLVSSVRGPGGGYLLGKDASSIAVGEVISAVDESVDATRCQGKGGCQGGDKCLTHALWRDLSDRLTGFLNNITLGELVNNQEVLDVSGRQHTHDAPRTRTQDAIDVKLRA</sequence>
<gene>
    <name evidence="1" type="primary">iscR</name>
    <name type="ordered locus">ECP_2536</name>
</gene>
<feature type="chain" id="PRO_0000268919" description="HTH-type transcriptional regulator IscR">
    <location>
        <begin position="1"/>
        <end position="162"/>
    </location>
</feature>
<feature type="domain" description="HTH rrf2-type" evidence="1">
    <location>
        <begin position="2"/>
        <end position="131"/>
    </location>
</feature>
<feature type="DNA-binding region" description="H-T-H motif" evidence="1">
    <location>
        <begin position="28"/>
        <end position="51"/>
    </location>
</feature>
<feature type="region of interest" description="Disordered" evidence="2">
    <location>
        <begin position="140"/>
        <end position="162"/>
    </location>
</feature>
<feature type="compositionally biased region" description="Basic and acidic residues" evidence="2">
    <location>
        <begin position="143"/>
        <end position="162"/>
    </location>
</feature>
<feature type="binding site" evidence="1">
    <location>
        <position position="92"/>
    </location>
    <ligand>
        <name>[2Fe-2S] cluster</name>
        <dbReference type="ChEBI" id="CHEBI:190135"/>
    </ligand>
</feature>
<feature type="binding site" evidence="1">
    <location>
        <position position="98"/>
    </location>
    <ligand>
        <name>[2Fe-2S] cluster</name>
        <dbReference type="ChEBI" id="CHEBI:190135"/>
    </ligand>
</feature>
<feature type="binding site" evidence="1">
    <location>
        <position position="104"/>
    </location>
    <ligand>
        <name>[2Fe-2S] cluster</name>
        <dbReference type="ChEBI" id="CHEBI:190135"/>
    </ligand>
</feature>
<accession>Q0TEV4</accession>
<protein>
    <recommendedName>
        <fullName evidence="1">HTH-type transcriptional regulator IscR</fullName>
    </recommendedName>
</protein>